<proteinExistence type="inferred from homology"/>
<reference key="1">
    <citation type="journal article" date="2007" name="Nat. Genet.">
        <title>Genomic analysis of Bartonella identifies type IV secretion systems as host adaptability factors.</title>
        <authorList>
            <person name="Saenz H.L."/>
            <person name="Engel P."/>
            <person name="Stoeckli M.C."/>
            <person name="Lanz C."/>
            <person name="Raddatz G."/>
            <person name="Vayssier-Taussat M."/>
            <person name="Birtles R."/>
            <person name="Schuster S.C."/>
            <person name="Dehio C."/>
        </authorList>
    </citation>
    <scope>NUCLEOTIDE SEQUENCE [LARGE SCALE GENOMIC DNA]</scope>
    <source>
        <strain>CIP 105476 / IBS 506</strain>
    </source>
</reference>
<evidence type="ECO:0000255" key="1">
    <source>
        <dbReference type="HAMAP-Rule" id="MF_00158"/>
    </source>
</evidence>
<gene>
    <name evidence="1" type="primary">panC</name>
    <name type="ordered locus">BT_0789</name>
</gene>
<sequence>MKILKTIAEVRYYISEERRLGFSIGFVPTMGALHEGHLALVERAKAMCDRVLVSIFVNPKQFGPHEDFAQYPRDLRSDCALLKKAGVECIFAPSVDEMWPAGNDTIVQVEKLSRILMGKLRPGHFCGVTSVVAKLFNIVQPDKAFFGEKDFQQILIIRRMVEDLAFPVEIVGVPILREADGVAHSSRNQFLTLEDRKAAKIIPESGKAAEKLYHEGERSVDKLCKIVRDTLQKETRAIIEAIDLRDMETLCVVKGKLNRPAVLLLTVRFGEVRLIDQYILQEKGGK</sequence>
<protein>
    <recommendedName>
        <fullName evidence="1">Pantothenate synthetase</fullName>
        <shortName evidence="1">PS</shortName>
        <ecNumber evidence="1">6.3.2.1</ecNumber>
    </recommendedName>
    <alternativeName>
        <fullName evidence="1">Pantoate--beta-alanine ligase</fullName>
    </alternativeName>
    <alternativeName>
        <fullName evidence="1">Pantoate-activating enzyme</fullName>
    </alternativeName>
</protein>
<name>PANC_BART1</name>
<accession>A9IRN9</accession>
<dbReference type="EC" id="6.3.2.1" evidence="1"/>
<dbReference type="EMBL" id="AM260525">
    <property type="protein sequence ID" value="CAK01204.1"/>
    <property type="molecule type" value="Genomic_DNA"/>
</dbReference>
<dbReference type="RefSeq" id="WP_012231317.1">
    <property type="nucleotide sequence ID" value="NC_010161.1"/>
</dbReference>
<dbReference type="SMR" id="A9IRN9"/>
<dbReference type="KEGG" id="btr:BT_0789"/>
<dbReference type="eggNOG" id="COG0414">
    <property type="taxonomic scope" value="Bacteria"/>
</dbReference>
<dbReference type="HOGENOM" id="CLU_047148_0_0_5"/>
<dbReference type="UniPathway" id="UPA00028">
    <property type="reaction ID" value="UER00005"/>
</dbReference>
<dbReference type="Proteomes" id="UP000001592">
    <property type="component" value="Chromosome"/>
</dbReference>
<dbReference type="GO" id="GO:0005829">
    <property type="term" value="C:cytosol"/>
    <property type="evidence" value="ECO:0007669"/>
    <property type="project" value="TreeGrafter"/>
</dbReference>
<dbReference type="GO" id="GO:0005524">
    <property type="term" value="F:ATP binding"/>
    <property type="evidence" value="ECO:0007669"/>
    <property type="project" value="UniProtKB-KW"/>
</dbReference>
<dbReference type="GO" id="GO:0004592">
    <property type="term" value="F:pantoate-beta-alanine ligase activity"/>
    <property type="evidence" value="ECO:0007669"/>
    <property type="project" value="UniProtKB-UniRule"/>
</dbReference>
<dbReference type="GO" id="GO:0015940">
    <property type="term" value="P:pantothenate biosynthetic process"/>
    <property type="evidence" value="ECO:0007669"/>
    <property type="project" value="UniProtKB-UniRule"/>
</dbReference>
<dbReference type="CDD" id="cd00560">
    <property type="entry name" value="PanC"/>
    <property type="match status" value="1"/>
</dbReference>
<dbReference type="FunFam" id="3.40.50.620:FF:000013">
    <property type="entry name" value="Pantothenate synthetase"/>
    <property type="match status" value="1"/>
</dbReference>
<dbReference type="Gene3D" id="3.40.50.620">
    <property type="entry name" value="HUPs"/>
    <property type="match status" value="1"/>
</dbReference>
<dbReference type="Gene3D" id="3.30.1300.10">
    <property type="entry name" value="Pantoate-beta-alanine ligase, C-terminal domain"/>
    <property type="match status" value="1"/>
</dbReference>
<dbReference type="HAMAP" id="MF_00158">
    <property type="entry name" value="PanC"/>
    <property type="match status" value="1"/>
</dbReference>
<dbReference type="InterPro" id="IPR004821">
    <property type="entry name" value="Cyt_trans-like"/>
</dbReference>
<dbReference type="InterPro" id="IPR003721">
    <property type="entry name" value="Pantoate_ligase"/>
</dbReference>
<dbReference type="InterPro" id="IPR042176">
    <property type="entry name" value="Pantoate_ligase_C"/>
</dbReference>
<dbReference type="InterPro" id="IPR014729">
    <property type="entry name" value="Rossmann-like_a/b/a_fold"/>
</dbReference>
<dbReference type="NCBIfam" id="TIGR00125">
    <property type="entry name" value="cyt_tran_rel"/>
    <property type="match status" value="1"/>
</dbReference>
<dbReference type="NCBIfam" id="TIGR00018">
    <property type="entry name" value="panC"/>
    <property type="match status" value="1"/>
</dbReference>
<dbReference type="PANTHER" id="PTHR21299">
    <property type="entry name" value="CYTIDYLATE KINASE/PANTOATE-BETA-ALANINE LIGASE"/>
    <property type="match status" value="1"/>
</dbReference>
<dbReference type="PANTHER" id="PTHR21299:SF1">
    <property type="entry name" value="PANTOATE--BETA-ALANINE LIGASE"/>
    <property type="match status" value="1"/>
</dbReference>
<dbReference type="Pfam" id="PF02569">
    <property type="entry name" value="Pantoate_ligase"/>
    <property type="match status" value="1"/>
</dbReference>
<dbReference type="SUPFAM" id="SSF52374">
    <property type="entry name" value="Nucleotidylyl transferase"/>
    <property type="match status" value="1"/>
</dbReference>
<feature type="chain" id="PRO_1000076841" description="Pantothenate synthetase">
    <location>
        <begin position="1"/>
        <end position="286"/>
    </location>
</feature>
<feature type="active site" description="Proton donor" evidence="1">
    <location>
        <position position="37"/>
    </location>
</feature>
<feature type="binding site" evidence="1">
    <location>
        <begin position="30"/>
        <end position="37"/>
    </location>
    <ligand>
        <name>ATP</name>
        <dbReference type="ChEBI" id="CHEBI:30616"/>
    </ligand>
</feature>
<feature type="binding site" evidence="1">
    <location>
        <position position="61"/>
    </location>
    <ligand>
        <name>(R)-pantoate</name>
        <dbReference type="ChEBI" id="CHEBI:15980"/>
    </ligand>
</feature>
<feature type="binding site" evidence="1">
    <location>
        <position position="61"/>
    </location>
    <ligand>
        <name>beta-alanine</name>
        <dbReference type="ChEBI" id="CHEBI:57966"/>
    </ligand>
</feature>
<feature type="binding site" evidence="1">
    <location>
        <begin position="147"/>
        <end position="150"/>
    </location>
    <ligand>
        <name>ATP</name>
        <dbReference type="ChEBI" id="CHEBI:30616"/>
    </ligand>
</feature>
<feature type="binding site" evidence="1">
    <location>
        <position position="153"/>
    </location>
    <ligand>
        <name>(R)-pantoate</name>
        <dbReference type="ChEBI" id="CHEBI:15980"/>
    </ligand>
</feature>
<feature type="binding site" evidence="1">
    <location>
        <position position="176"/>
    </location>
    <ligand>
        <name>ATP</name>
        <dbReference type="ChEBI" id="CHEBI:30616"/>
    </ligand>
</feature>
<feature type="binding site" evidence="1">
    <location>
        <begin position="184"/>
        <end position="187"/>
    </location>
    <ligand>
        <name>ATP</name>
        <dbReference type="ChEBI" id="CHEBI:30616"/>
    </ligand>
</feature>
<comment type="function">
    <text evidence="1">Catalyzes the condensation of pantoate with beta-alanine in an ATP-dependent reaction via a pantoyl-adenylate intermediate.</text>
</comment>
<comment type="catalytic activity">
    <reaction evidence="1">
        <text>(R)-pantoate + beta-alanine + ATP = (R)-pantothenate + AMP + diphosphate + H(+)</text>
        <dbReference type="Rhea" id="RHEA:10912"/>
        <dbReference type="ChEBI" id="CHEBI:15378"/>
        <dbReference type="ChEBI" id="CHEBI:15980"/>
        <dbReference type="ChEBI" id="CHEBI:29032"/>
        <dbReference type="ChEBI" id="CHEBI:30616"/>
        <dbReference type="ChEBI" id="CHEBI:33019"/>
        <dbReference type="ChEBI" id="CHEBI:57966"/>
        <dbReference type="ChEBI" id="CHEBI:456215"/>
        <dbReference type="EC" id="6.3.2.1"/>
    </reaction>
</comment>
<comment type="pathway">
    <text evidence="1">Cofactor biosynthesis; (R)-pantothenate biosynthesis; (R)-pantothenate from (R)-pantoate and beta-alanine: step 1/1.</text>
</comment>
<comment type="subunit">
    <text evidence="1">Homodimer.</text>
</comment>
<comment type="subcellular location">
    <subcellularLocation>
        <location evidence="1">Cytoplasm</location>
    </subcellularLocation>
</comment>
<comment type="miscellaneous">
    <text evidence="1">The reaction proceeds by a bi uni uni bi ping pong mechanism.</text>
</comment>
<comment type="similarity">
    <text evidence="1">Belongs to the pantothenate synthetase family.</text>
</comment>
<organism>
    <name type="scientific">Bartonella tribocorum (strain CIP 105476 / IBS 506)</name>
    <dbReference type="NCBI Taxonomy" id="382640"/>
    <lineage>
        <taxon>Bacteria</taxon>
        <taxon>Pseudomonadati</taxon>
        <taxon>Pseudomonadota</taxon>
        <taxon>Alphaproteobacteria</taxon>
        <taxon>Hyphomicrobiales</taxon>
        <taxon>Bartonellaceae</taxon>
        <taxon>Bartonella</taxon>
    </lineage>
</organism>
<keyword id="KW-0067">ATP-binding</keyword>
<keyword id="KW-0963">Cytoplasm</keyword>
<keyword id="KW-0436">Ligase</keyword>
<keyword id="KW-0547">Nucleotide-binding</keyword>
<keyword id="KW-0566">Pantothenate biosynthesis</keyword>